<comment type="function">
    <text evidence="1">Metabolic-stress sensing protein kinase that phosphorylates the alpha subunit of eukaryotic translation initiation factor 2 eIF-2-alpha in response to low amino acid availability. Plays a role as an activator of the general amino acid control pathway required for adapatation to amino acid starvation. Converts phosphorylated eIF-2-alpha either to a competitive inhibitor of translation initiation, leading to a global protein synthesis repression, and thus to a reduced overall utilization of amino acids, or to a translational initiation activation of specific mRNAs, and hence allowing reprogramming of amino acid biosynthetic gene expression to alleviate nutrient depletion. Binds uncharged tRNAs.</text>
</comment>
<comment type="catalytic activity">
    <reaction evidence="1">
        <text>L-seryl-[protein] + ATP = O-phospho-L-seryl-[protein] + ADP + H(+)</text>
        <dbReference type="Rhea" id="RHEA:17989"/>
        <dbReference type="Rhea" id="RHEA-COMP:9863"/>
        <dbReference type="Rhea" id="RHEA-COMP:11604"/>
        <dbReference type="ChEBI" id="CHEBI:15378"/>
        <dbReference type="ChEBI" id="CHEBI:29999"/>
        <dbReference type="ChEBI" id="CHEBI:30616"/>
        <dbReference type="ChEBI" id="CHEBI:83421"/>
        <dbReference type="ChEBI" id="CHEBI:456216"/>
        <dbReference type="EC" id="2.7.11.1"/>
    </reaction>
</comment>
<comment type="catalytic activity">
    <reaction evidence="1">
        <text>L-threonyl-[protein] + ATP = O-phospho-L-threonyl-[protein] + ADP + H(+)</text>
        <dbReference type="Rhea" id="RHEA:46608"/>
        <dbReference type="Rhea" id="RHEA-COMP:11060"/>
        <dbReference type="Rhea" id="RHEA-COMP:11605"/>
        <dbReference type="ChEBI" id="CHEBI:15378"/>
        <dbReference type="ChEBI" id="CHEBI:30013"/>
        <dbReference type="ChEBI" id="CHEBI:30616"/>
        <dbReference type="ChEBI" id="CHEBI:61977"/>
        <dbReference type="ChEBI" id="CHEBI:456216"/>
        <dbReference type="EC" id="2.7.11.1"/>
    </reaction>
</comment>
<comment type="activity regulation">
    <text evidence="1">The kinase activity is stimulated upon binding to uncharged tRNAs.</text>
</comment>
<comment type="subunit">
    <text evidence="1">Homodimer; homodimerization is important for kinase activation by uncharged tRNAs.</text>
</comment>
<comment type="subcellular location">
    <subcellularLocation>
        <location evidence="1">Cytoplasm</location>
    </subcellularLocation>
</comment>
<comment type="alternative products">
    <event type="alternative splicing"/>
    <isoform>
        <id>Q9LX30-1</id>
        <name>1</name>
        <sequence type="displayed"/>
    </isoform>
    <text>A number of isoforms are produced. According to EST sequences.</text>
</comment>
<comment type="tissue specificity">
    <text evidence="7">Expressed in roots, leaves, stems, buds, flowers, siliques and seedlings.</text>
</comment>
<comment type="similarity">
    <text evidence="3">Belongs to the protein kinase superfamily. Ser/Thr protein kinase family. GCN2 subfamily.</text>
</comment>
<comment type="caution">
    <text evidence="8">Although it is unknown whether it is a serine/threonine or a tyrosine protein kinase, it is strongly related to the serine/threonine-protein kinase family.</text>
</comment>
<comment type="sequence caution" evidence="8">
    <conflict type="erroneous gene model prediction">
        <sequence resource="EMBL-CDS" id="CAB91611"/>
    </conflict>
</comment>
<sequence length="1241" mass="140322">MGRSSSKKKKKRGGSGRRGQLKDHGSNADEDNELLSEEITALSAIFQEDCKVVSDSRSPPQIAIKLRPYSKDMGYEDTDISAMLIVRCLPGYPYKCPKLQITPEQGLTTADAEKLLSLLEDQANSNAREGRVMIFNLVEAAQEFLSEIIPESHDEESVPCLTAHRSTQFIEQPMLSNIAKSCSGGPFVYGFIDLFSGLEDARNWSLTPDENRGIVSSVQSHPLDTSRILHQKPDKNLKRFEDHAKEEVALPAPIAKLNTVQEENVDDTSISSFDSSKSTDDVESGLFQNEKKESNLQDDTAEDDSTNSESESLGSWSSDSLAQDQVPQISKKDLLMVHLLRVACTSRGPLADALPQITDELHELGILSEEVLDLASKSSPDFNRTFEHAFNQNMASTSVPQFWEPPSDSCEPNASLPSSRYLNDFEELKPLGQGGFGHVVLCKNKLDGRQYAVKKIRLKDKEIPVNSRIVREVATLSRLQHQHVVRYYQAWFETGVVDPFAGANWGSKTAGSSMFSYSGAVSTEIPEQDNNLESTYLYIQMEYCPRTLRQVFESYNHFDKDFAWHLIRQIVEGLAHIHGQGIIHRDFTPNNIFFDARNDIKIGDFGLAKFLKLEQLDQDGGFSTDVAGSGVDSTGQAGTYFYTAPEIEQDWPKIDEKADMYSLGVVFFELWHPFGTAMERHVILTNLKLKGELPLKWVNEFPEQASLLRRLMSPSPSDRPSATELLKHAFPPRMESELLDNILRIMQTSEDSSVYDRVVSVIFDEEVLEMKSHQSSRSRLCADDSYIQYTEINTELRDYVVEITKEVFRQHCAKHLEVIPMRLLSDCPQFSRKTVKLLTNGGDMLELCYELRLPFVHWISVNQKSSFKRYEISHVYRRAIGHSPPNPCLQADFDIVGGTLSLTEAEVLKVIVDITTHIFHRGSCDIHLNHGDLLDAIWSWAGIKAEHRRKVAELLSMMGSLRPQSSERKLKWVFIRRQLLQELKLPEAVVNRLQTVASRFCGDADQALPRLRGALRADRPTRKALDELSNLLTYLRVWRIEEHVHIDVLMPPTESYHRNLFFQVFLTKENSSGTSNDGVLLAVGGRYDWLVQEVCDREHKMNLPGAVGVSLALETIFQHLPMDLRPIRNEVSTSVLVCSRGGGGLLVQRMELVAELWEKSIKAEFVPTPDPSLTEQYEYANEHEIKCLVIITESGVAQNQIEFVKVRHLELKKEKVVGREELVKFLLDAMAVQFRNPSVWS</sequence>
<feature type="chain" id="PRO_0000085961" description="eIF-2-alpha kinase GCN2">
    <location>
        <begin position="1"/>
        <end position="1241"/>
    </location>
</feature>
<feature type="domain" description="RWD" evidence="4">
    <location>
        <begin position="37"/>
        <end position="148"/>
    </location>
</feature>
<feature type="domain" description="Protein kinase" evidence="3">
    <location>
        <begin position="425"/>
        <end position="731"/>
    </location>
</feature>
<feature type="region of interest" description="Disordered" evidence="6">
    <location>
        <begin position="1"/>
        <end position="33"/>
    </location>
</feature>
<feature type="region of interest" description="Disordered" evidence="6">
    <location>
        <begin position="253"/>
        <end position="321"/>
    </location>
</feature>
<feature type="region of interest" description="Histidyl-tRNA synthetase-like">
    <location>
        <begin position="819"/>
        <end position="1219"/>
    </location>
</feature>
<feature type="compositionally biased region" description="Basic residues" evidence="6">
    <location>
        <begin position="1"/>
        <end position="15"/>
    </location>
</feature>
<feature type="compositionally biased region" description="Low complexity" evidence="6">
    <location>
        <begin position="267"/>
        <end position="276"/>
    </location>
</feature>
<feature type="compositionally biased region" description="Low complexity" evidence="6">
    <location>
        <begin position="307"/>
        <end position="321"/>
    </location>
</feature>
<feature type="active site" description="Proton acceptor" evidence="3 5">
    <location>
        <position position="586"/>
    </location>
</feature>
<feature type="binding site" evidence="3">
    <location>
        <begin position="431"/>
        <end position="439"/>
    </location>
    <ligand>
        <name>ATP</name>
        <dbReference type="ChEBI" id="CHEBI:30616"/>
    </ligand>
</feature>
<feature type="binding site" evidence="3">
    <location>
        <position position="454"/>
    </location>
    <ligand>
        <name>ATP</name>
        <dbReference type="ChEBI" id="CHEBI:30616"/>
    </ligand>
</feature>
<keyword id="KW-0010">Activator</keyword>
<keyword id="KW-0025">Alternative splicing</keyword>
<keyword id="KW-0067">ATP-binding</keyword>
<keyword id="KW-0963">Cytoplasm</keyword>
<keyword id="KW-0418">Kinase</keyword>
<keyword id="KW-0547">Nucleotide-binding</keyword>
<keyword id="KW-0648">Protein biosynthesis</keyword>
<keyword id="KW-1185">Reference proteome</keyword>
<keyword id="KW-0694">RNA-binding</keyword>
<keyword id="KW-0723">Serine/threonine-protein kinase</keyword>
<keyword id="KW-0346">Stress response</keyword>
<keyword id="KW-0808">Transferase</keyword>
<keyword id="KW-0810">Translation regulation</keyword>
<keyword id="KW-0820">tRNA-binding</keyword>
<protein>
    <recommendedName>
        <fullName evidence="2">eIF-2-alpha kinase GCN2</fullName>
    </recommendedName>
    <alternativeName>
        <fullName evidence="1">serine/threonine-protein kinase GCN2</fullName>
        <ecNumber>2.7.11.1</ecNumber>
    </alternativeName>
</protein>
<accession>Q9LX30</accession>
<accession>Q8H2D3</accession>
<organism>
    <name type="scientific">Arabidopsis thaliana</name>
    <name type="common">Mouse-ear cress</name>
    <dbReference type="NCBI Taxonomy" id="3702"/>
    <lineage>
        <taxon>Eukaryota</taxon>
        <taxon>Viridiplantae</taxon>
        <taxon>Streptophyta</taxon>
        <taxon>Embryophyta</taxon>
        <taxon>Tracheophyta</taxon>
        <taxon>Spermatophyta</taxon>
        <taxon>Magnoliopsida</taxon>
        <taxon>eudicotyledons</taxon>
        <taxon>Gunneridae</taxon>
        <taxon>Pentapetalae</taxon>
        <taxon>rosids</taxon>
        <taxon>malvids</taxon>
        <taxon>Brassicales</taxon>
        <taxon>Brassicaceae</taxon>
        <taxon>Camelineae</taxon>
        <taxon>Arabidopsis</taxon>
    </lineage>
</organism>
<dbReference type="EC" id="2.7.11.1"/>
<dbReference type="EMBL" id="AJ459823">
    <property type="protein sequence ID" value="CAD30860.1"/>
    <property type="molecule type" value="mRNA"/>
</dbReference>
<dbReference type="EMBL" id="AL356014">
    <property type="protein sequence ID" value="CAB91611.1"/>
    <property type="status" value="ALT_SEQ"/>
    <property type="molecule type" value="Genomic_DNA"/>
</dbReference>
<dbReference type="EMBL" id="CP002686">
    <property type="protein sequence ID" value="AEE79918.1"/>
    <property type="molecule type" value="Genomic_DNA"/>
</dbReference>
<dbReference type="EMBL" id="CP002686">
    <property type="protein sequence ID" value="ANM63987.1"/>
    <property type="molecule type" value="Genomic_DNA"/>
</dbReference>
<dbReference type="PIR" id="T49009">
    <property type="entry name" value="T49009"/>
</dbReference>
<dbReference type="RefSeq" id="NP_001326041.1">
    <molecule id="Q9LX30-1"/>
    <property type="nucleotide sequence ID" value="NM_001339969.1"/>
</dbReference>
<dbReference type="RefSeq" id="NP_191500.2">
    <molecule id="Q9LX30-1"/>
    <property type="nucleotide sequence ID" value="NM_115803.3"/>
</dbReference>
<dbReference type="SMR" id="Q9LX30"/>
<dbReference type="FunCoup" id="Q9LX30">
    <property type="interactions" value="3372"/>
</dbReference>
<dbReference type="STRING" id="3702.Q9LX30"/>
<dbReference type="iPTMnet" id="Q9LX30"/>
<dbReference type="PaxDb" id="3702-AT3G59410.2"/>
<dbReference type="ProteomicsDB" id="222173">
    <molecule id="Q9LX30-1"/>
</dbReference>
<dbReference type="DNASU" id="825110"/>
<dbReference type="EnsemblPlants" id="AT3G59410.1">
    <molecule id="Q9LX30-1"/>
    <property type="protein sequence ID" value="AT3G59410.1"/>
    <property type="gene ID" value="AT3G59410"/>
</dbReference>
<dbReference type="EnsemblPlants" id="AT3G59410.3">
    <molecule id="Q9LX30-1"/>
    <property type="protein sequence ID" value="AT3G59410.3"/>
    <property type="gene ID" value="AT3G59410"/>
</dbReference>
<dbReference type="GeneID" id="825110"/>
<dbReference type="Gramene" id="AT3G59410.1">
    <molecule id="Q9LX30-1"/>
    <property type="protein sequence ID" value="AT3G59410.1"/>
    <property type="gene ID" value="AT3G59410"/>
</dbReference>
<dbReference type="Gramene" id="AT3G59410.3">
    <molecule id="Q9LX30-1"/>
    <property type="protein sequence ID" value="AT3G59410.3"/>
    <property type="gene ID" value="AT3G59410"/>
</dbReference>
<dbReference type="KEGG" id="ath:AT3G59410"/>
<dbReference type="Araport" id="AT3G59410"/>
<dbReference type="TAIR" id="AT3G59410">
    <property type="gene designation" value="GCN2"/>
</dbReference>
<dbReference type="eggNOG" id="KOG1035">
    <property type="taxonomic scope" value="Eukaryota"/>
</dbReference>
<dbReference type="InParanoid" id="Q9LX30"/>
<dbReference type="OMA" id="ADEAWND"/>
<dbReference type="OrthoDB" id="341578at2759"/>
<dbReference type="PhylomeDB" id="Q9LX30"/>
<dbReference type="PRO" id="PR:Q9LX30"/>
<dbReference type="Proteomes" id="UP000006548">
    <property type="component" value="Chromosome 3"/>
</dbReference>
<dbReference type="ExpressionAtlas" id="Q9LX30">
    <property type="expression patterns" value="baseline and differential"/>
</dbReference>
<dbReference type="GO" id="GO:0005737">
    <property type="term" value="C:cytoplasm"/>
    <property type="evidence" value="ECO:0007669"/>
    <property type="project" value="UniProtKB-SubCell"/>
</dbReference>
<dbReference type="GO" id="GO:0005524">
    <property type="term" value="F:ATP binding"/>
    <property type="evidence" value="ECO:0007669"/>
    <property type="project" value="UniProtKB-KW"/>
</dbReference>
<dbReference type="GO" id="GO:0106310">
    <property type="term" value="F:protein serine kinase activity"/>
    <property type="evidence" value="ECO:0007669"/>
    <property type="project" value="RHEA"/>
</dbReference>
<dbReference type="GO" id="GO:0004674">
    <property type="term" value="F:protein serine/threonine kinase activity"/>
    <property type="evidence" value="ECO:0007669"/>
    <property type="project" value="UniProtKB-KW"/>
</dbReference>
<dbReference type="GO" id="GO:0000049">
    <property type="term" value="F:tRNA binding"/>
    <property type="evidence" value="ECO:0007669"/>
    <property type="project" value="UniProtKB-KW"/>
</dbReference>
<dbReference type="GO" id="GO:0034198">
    <property type="term" value="P:cellular response to amino acid starvation"/>
    <property type="evidence" value="ECO:0000250"/>
    <property type="project" value="UniProtKB"/>
</dbReference>
<dbReference type="GO" id="GO:1990611">
    <property type="term" value="P:regulation of cytoplasmic translational initiation in response to stress"/>
    <property type="evidence" value="ECO:0000250"/>
    <property type="project" value="UniProtKB"/>
</dbReference>
<dbReference type="GO" id="GO:0006412">
    <property type="term" value="P:translation"/>
    <property type="evidence" value="ECO:0007669"/>
    <property type="project" value="UniProtKB-KW"/>
</dbReference>
<dbReference type="CDD" id="cd23818">
    <property type="entry name" value="RWD_RNF25"/>
    <property type="match status" value="1"/>
</dbReference>
<dbReference type="CDD" id="cd14046">
    <property type="entry name" value="STKc_EIF2AK4_GCN2_rpt2"/>
    <property type="match status" value="1"/>
</dbReference>
<dbReference type="FunFam" id="1.10.510.10:FF:000539">
    <property type="entry name" value="eIF-2-alpha kinase GCN2"/>
    <property type="match status" value="1"/>
</dbReference>
<dbReference type="FunFam" id="3.10.110.10:FF:000050">
    <property type="entry name" value="eIF-2-alpha kinase GCN2"/>
    <property type="match status" value="1"/>
</dbReference>
<dbReference type="FunFam" id="3.30.200.20:FF:000304">
    <property type="entry name" value="eIF-2-alpha kinase GCN2"/>
    <property type="match status" value="1"/>
</dbReference>
<dbReference type="FunFam" id="3.30.930.10:FF:000068">
    <property type="entry name" value="eIF-2-alpha kinase GCN2"/>
    <property type="match status" value="1"/>
</dbReference>
<dbReference type="FunFam" id="3.40.50.800:FF:000012">
    <property type="entry name" value="Histidine--tRNA ligase, cytoplasmic"/>
    <property type="match status" value="1"/>
</dbReference>
<dbReference type="Gene3D" id="3.40.50.800">
    <property type="entry name" value="Anticodon-binding domain"/>
    <property type="match status" value="1"/>
</dbReference>
<dbReference type="Gene3D" id="3.30.930.10">
    <property type="entry name" value="Bira Bifunctional Protein, Domain 2"/>
    <property type="match status" value="1"/>
</dbReference>
<dbReference type="Gene3D" id="3.30.200.20">
    <property type="entry name" value="Phosphorylase Kinase, domain 1"/>
    <property type="match status" value="1"/>
</dbReference>
<dbReference type="Gene3D" id="1.10.510.10">
    <property type="entry name" value="Transferase(Phosphotransferase) domain 1"/>
    <property type="match status" value="1"/>
</dbReference>
<dbReference type="Gene3D" id="3.10.110.10">
    <property type="entry name" value="Ubiquitin Conjugating Enzyme"/>
    <property type="match status" value="1"/>
</dbReference>
<dbReference type="InterPro" id="IPR045864">
    <property type="entry name" value="aa-tRNA-synth_II/BPL/LPL"/>
</dbReference>
<dbReference type="InterPro" id="IPR036621">
    <property type="entry name" value="Anticodon-bd_dom_sf"/>
</dbReference>
<dbReference type="InterPro" id="IPR041715">
    <property type="entry name" value="HisRS-like_core"/>
</dbReference>
<dbReference type="InterPro" id="IPR024435">
    <property type="entry name" value="HisRS-related_dom"/>
</dbReference>
<dbReference type="InterPro" id="IPR011009">
    <property type="entry name" value="Kinase-like_dom_sf"/>
</dbReference>
<dbReference type="InterPro" id="IPR000719">
    <property type="entry name" value="Prot_kinase_dom"/>
</dbReference>
<dbReference type="InterPro" id="IPR017441">
    <property type="entry name" value="Protein_kinase_ATP_BS"/>
</dbReference>
<dbReference type="InterPro" id="IPR006575">
    <property type="entry name" value="RWD_dom"/>
</dbReference>
<dbReference type="InterPro" id="IPR008266">
    <property type="entry name" value="Tyr_kinase_AS"/>
</dbReference>
<dbReference type="InterPro" id="IPR016135">
    <property type="entry name" value="UBQ-conjugating_enzyme/RWD"/>
</dbReference>
<dbReference type="PANTHER" id="PTHR11476">
    <property type="entry name" value="HISTIDYL-TRNA SYNTHETASE"/>
    <property type="match status" value="1"/>
</dbReference>
<dbReference type="PANTHER" id="PTHR11476:SF10">
    <property type="entry name" value="NON-SPECIFIC SERINE_THREONINE PROTEIN KINASE"/>
    <property type="match status" value="1"/>
</dbReference>
<dbReference type="Pfam" id="PF12745">
    <property type="entry name" value="HGTP_anticodon2"/>
    <property type="match status" value="1"/>
</dbReference>
<dbReference type="Pfam" id="PF00069">
    <property type="entry name" value="Pkinase"/>
    <property type="match status" value="1"/>
</dbReference>
<dbReference type="Pfam" id="PF05773">
    <property type="entry name" value="RWD"/>
    <property type="match status" value="1"/>
</dbReference>
<dbReference type="Pfam" id="PF13393">
    <property type="entry name" value="tRNA-synt_His"/>
    <property type="match status" value="1"/>
</dbReference>
<dbReference type="SMART" id="SM00591">
    <property type="entry name" value="RWD"/>
    <property type="match status" value="1"/>
</dbReference>
<dbReference type="SUPFAM" id="SSF52954">
    <property type="entry name" value="Class II aaRS ABD-related"/>
    <property type="match status" value="1"/>
</dbReference>
<dbReference type="SUPFAM" id="SSF55681">
    <property type="entry name" value="Class II aaRS and biotin synthetases"/>
    <property type="match status" value="1"/>
</dbReference>
<dbReference type="SUPFAM" id="SSF56112">
    <property type="entry name" value="Protein kinase-like (PK-like)"/>
    <property type="match status" value="1"/>
</dbReference>
<dbReference type="SUPFAM" id="SSF54495">
    <property type="entry name" value="UBC-like"/>
    <property type="match status" value="1"/>
</dbReference>
<dbReference type="PROSITE" id="PS00107">
    <property type="entry name" value="PROTEIN_KINASE_ATP"/>
    <property type="match status" value="1"/>
</dbReference>
<dbReference type="PROSITE" id="PS50011">
    <property type="entry name" value="PROTEIN_KINASE_DOM"/>
    <property type="match status" value="1"/>
</dbReference>
<dbReference type="PROSITE" id="PS00109">
    <property type="entry name" value="PROTEIN_KINASE_TYR"/>
    <property type="match status" value="1"/>
</dbReference>
<dbReference type="PROSITE" id="PS50908">
    <property type="entry name" value="RWD"/>
    <property type="match status" value="1"/>
</dbReference>
<name>GCN2_ARATH</name>
<reference key="1">
    <citation type="journal article" date="2003" name="Planta">
        <title>Molecular cloning of an Arabidopsis homologue of GCN2, a protein kinase involved in co-ordinated response to amino acid starvation.</title>
        <authorList>
            <person name="Zhang Y."/>
            <person name="Dickinson R."/>
            <person name="Paul M.J."/>
            <person name="Halford N.G."/>
        </authorList>
    </citation>
    <scope>NUCLEOTIDE SEQUENCE [MRNA]</scope>
    <scope>TISSUE SPECIFICITY</scope>
    <source>
        <strain>cv. Columbia</strain>
        <tissue>Leaf</tissue>
    </source>
</reference>
<reference key="2">
    <citation type="journal article" date="2000" name="Nature">
        <title>Sequence and analysis of chromosome 3 of the plant Arabidopsis thaliana.</title>
        <authorList>
            <person name="Salanoubat M."/>
            <person name="Lemcke K."/>
            <person name="Rieger M."/>
            <person name="Ansorge W."/>
            <person name="Unseld M."/>
            <person name="Fartmann B."/>
            <person name="Valle G."/>
            <person name="Bloecker H."/>
            <person name="Perez-Alonso M."/>
            <person name="Obermaier B."/>
            <person name="Delseny M."/>
            <person name="Boutry M."/>
            <person name="Grivell L.A."/>
            <person name="Mache R."/>
            <person name="Puigdomenech P."/>
            <person name="De Simone V."/>
            <person name="Choisne N."/>
            <person name="Artiguenave F."/>
            <person name="Robert C."/>
            <person name="Brottier P."/>
            <person name="Wincker P."/>
            <person name="Cattolico L."/>
            <person name="Weissenbach J."/>
            <person name="Saurin W."/>
            <person name="Quetier F."/>
            <person name="Schaefer M."/>
            <person name="Mueller-Auer S."/>
            <person name="Gabel C."/>
            <person name="Fuchs M."/>
            <person name="Benes V."/>
            <person name="Wurmbach E."/>
            <person name="Drzonek H."/>
            <person name="Erfle H."/>
            <person name="Jordan N."/>
            <person name="Bangert S."/>
            <person name="Wiedelmann R."/>
            <person name="Kranz H."/>
            <person name="Voss H."/>
            <person name="Holland R."/>
            <person name="Brandt P."/>
            <person name="Nyakatura G."/>
            <person name="Vezzi A."/>
            <person name="D'Angelo M."/>
            <person name="Pallavicini A."/>
            <person name="Toppo S."/>
            <person name="Simionati B."/>
            <person name="Conrad A."/>
            <person name="Hornischer K."/>
            <person name="Kauer G."/>
            <person name="Loehnert T.-H."/>
            <person name="Nordsiek G."/>
            <person name="Reichelt J."/>
            <person name="Scharfe M."/>
            <person name="Schoen O."/>
            <person name="Bargues M."/>
            <person name="Terol J."/>
            <person name="Climent J."/>
            <person name="Navarro P."/>
            <person name="Collado C."/>
            <person name="Perez-Perez A."/>
            <person name="Ottenwaelder B."/>
            <person name="Duchemin D."/>
            <person name="Cooke R."/>
            <person name="Laudie M."/>
            <person name="Berger-Llauro C."/>
            <person name="Purnelle B."/>
            <person name="Masuy D."/>
            <person name="de Haan M."/>
            <person name="Maarse A.C."/>
            <person name="Alcaraz J.-P."/>
            <person name="Cottet A."/>
            <person name="Casacuberta E."/>
            <person name="Monfort A."/>
            <person name="Argiriou A."/>
            <person name="Flores M."/>
            <person name="Liguori R."/>
            <person name="Vitale D."/>
            <person name="Mannhaupt G."/>
            <person name="Haase D."/>
            <person name="Schoof H."/>
            <person name="Rudd S."/>
            <person name="Zaccaria P."/>
            <person name="Mewes H.-W."/>
            <person name="Mayer K.F.X."/>
            <person name="Kaul S."/>
            <person name="Town C.D."/>
            <person name="Koo H.L."/>
            <person name="Tallon L.J."/>
            <person name="Jenkins J."/>
            <person name="Rooney T."/>
            <person name="Rizzo M."/>
            <person name="Walts A."/>
            <person name="Utterback T."/>
            <person name="Fujii C.Y."/>
            <person name="Shea T.P."/>
            <person name="Creasy T.H."/>
            <person name="Haas B."/>
            <person name="Maiti R."/>
            <person name="Wu D."/>
            <person name="Peterson J."/>
            <person name="Van Aken S."/>
            <person name="Pai G."/>
            <person name="Militscher J."/>
            <person name="Sellers P."/>
            <person name="Gill J.E."/>
            <person name="Feldblyum T.V."/>
            <person name="Preuss D."/>
            <person name="Lin X."/>
            <person name="Nierman W.C."/>
            <person name="Salzberg S.L."/>
            <person name="White O."/>
            <person name="Venter J.C."/>
            <person name="Fraser C.M."/>
            <person name="Kaneko T."/>
            <person name="Nakamura Y."/>
            <person name="Sato S."/>
            <person name="Kato T."/>
            <person name="Asamizu E."/>
            <person name="Sasamoto S."/>
            <person name="Kimura T."/>
            <person name="Idesawa K."/>
            <person name="Kawashima K."/>
            <person name="Kishida Y."/>
            <person name="Kiyokawa C."/>
            <person name="Kohara M."/>
            <person name="Matsumoto M."/>
            <person name="Matsuno A."/>
            <person name="Muraki A."/>
            <person name="Nakayama S."/>
            <person name="Nakazaki N."/>
            <person name="Shinpo S."/>
            <person name="Takeuchi C."/>
            <person name="Wada T."/>
            <person name="Watanabe A."/>
            <person name="Yamada M."/>
            <person name="Yasuda M."/>
            <person name="Tabata S."/>
        </authorList>
    </citation>
    <scope>NUCLEOTIDE SEQUENCE [LARGE SCALE GENOMIC DNA]</scope>
    <source>
        <strain>cv. Columbia</strain>
    </source>
</reference>
<reference key="3">
    <citation type="journal article" date="2017" name="Plant J.">
        <title>Araport11: a complete reannotation of the Arabidopsis thaliana reference genome.</title>
        <authorList>
            <person name="Cheng C.Y."/>
            <person name="Krishnakumar V."/>
            <person name="Chan A.P."/>
            <person name="Thibaud-Nissen F."/>
            <person name="Schobel S."/>
            <person name="Town C.D."/>
        </authorList>
    </citation>
    <scope>GENOME REANNOTATION</scope>
    <source>
        <strain>cv. Columbia</strain>
    </source>
</reference>
<evidence type="ECO:0000250" key="1">
    <source>
        <dbReference type="UniProtKB" id="P15442"/>
    </source>
</evidence>
<evidence type="ECO:0000250" key="2">
    <source>
        <dbReference type="UniProtKB" id="Q9HGN1"/>
    </source>
</evidence>
<evidence type="ECO:0000255" key="3">
    <source>
        <dbReference type="PROSITE-ProRule" id="PRU00159"/>
    </source>
</evidence>
<evidence type="ECO:0000255" key="4">
    <source>
        <dbReference type="PROSITE-ProRule" id="PRU00179"/>
    </source>
</evidence>
<evidence type="ECO:0000255" key="5">
    <source>
        <dbReference type="PROSITE-ProRule" id="PRU10028"/>
    </source>
</evidence>
<evidence type="ECO:0000256" key="6">
    <source>
        <dbReference type="SAM" id="MobiDB-lite"/>
    </source>
</evidence>
<evidence type="ECO:0000269" key="7">
    <source>
    </source>
</evidence>
<evidence type="ECO:0000305" key="8"/>
<gene>
    <name evidence="2" type="primary">GCN2</name>
    <name type="ordered locus">At3g59410</name>
    <name type="ORF">F25L23_270</name>
</gene>
<proteinExistence type="evidence at transcript level"/>